<name>KDKA_XYLFA</name>
<keyword id="KW-0067">ATP-binding</keyword>
<keyword id="KW-0997">Cell inner membrane</keyword>
<keyword id="KW-1003">Cell membrane</keyword>
<keyword id="KW-0418">Kinase</keyword>
<keyword id="KW-0448">Lipopolysaccharide biosynthesis</keyword>
<keyword id="KW-0472">Membrane</keyword>
<keyword id="KW-0547">Nucleotide-binding</keyword>
<keyword id="KW-0808">Transferase</keyword>
<feature type="chain" id="PRO_0000194322" description="3-deoxy-D-manno-octulosonic acid kinase">
    <location>
        <begin position="1"/>
        <end position="249"/>
    </location>
</feature>
<feature type="active site" evidence="2">
    <location>
        <position position="175"/>
    </location>
</feature>
<proteinExistence type="inferred from homology"/>
<sequence length="249" mass="28750">MVAFDANEILTPFCEGHREGAILFDCQRLRQVEYGLFVPAWWGGRAHAVSEGGRGSAWFVEASFGNAVLRQYRRGGMIAMLNRDRYFWCGGHRTRSVLEFRLMRELISRGLPVPTPLAACYVRYGVQYRAAILMERLEGVSSLAMCVRGNSKETHWEQIGRMISRFHREGLDHADLNAHNILLDQAGQCWLIDFDRGALRIPATKWRERNLARLLRSLLKIRGERSVDAVYRDFERLRRAYDLAWSRGC</sequence>
<gene>
    <name type="primary">kdkA</name>
    <name type="ordered locus">XF_2153</name>
</gene>
<organism>
    <name type="scientific">Xylella fastidiosa (strain 9a5c)</name>
    <dbReference type="NCBI Taxonomy" id="160492"/>
    <lineage>
        <taxon>Bacteria</taxon>
        <taxon>Pseudomonadati</taxon>
        <taxon>Pseudomonadota</taxon>
        <taxon>Gammaproteobacteria</taxon>
        <taxon>Lysobacterales</taxon>
        <taxon>Lysobacteraceae</taxon>
        <taxon>Xylella</taxon>
    </lineage>
</organism>
<evidence type="ECO:0000250" key="1"/>
<evidence type="ECO:0000255" key="2"/>
<evidence type="ECO:0000305" key="3"/>
<comment type="function">
    <text evidence="1">Catalyzes the ATP-dependent phosphorylation of the 3-deoxy-D-manno-octulosonic acid (Kdo) residue in Kdo-lipid IV(A) at the 4-OH position.</text>
</comment>
<comment type="catalytic activity">
    <reaction>
        <text>an alpha-Kdo-(2-&gt;6)-lipid IVA + ATP = a 4-O-phospho-alpha-Kdo-(2-&gt;6)-lipid IVA + ADP + H(+)</text>
        <dbReference type="Rhea" id="RHEA:74271"/>
        <dbReference type="ChEBI" id="CHEBI:15378"/>
        <dbReference type="ChEBI" id="CHEBI:30616"/>
        <dbReference type="ChEBI" id="CHEBI:176428"/>
        <dbReference type="ChEBI" id="CHEBI:193140"/>
        <dbReference type="ChEBI" id="CHEBI:456216"/>
        <dbReference type="EC" id="2.7.1.166"/>
    </reaction>
</comment>
<comment type="pathway">
    <text>Bacterial outer membrane biogenesis; LPS core biosynthesis.</text>
</comment>
<comment type="subcellular location">
    <subcellularLocation>
        <location evidence="1">Cell inner membrane</location>
        <topology evidence="1">Peripheral membrane protein</topology>
        <orientation evidence="1">Cytoplasmic side</orientation>
    </subcellularLocation>
</comment>
<comment type="similarity">
    <text evidence="3">Belongs to the protein kinase superfamily. KdkA/RfaP family.</text>
</comment>
<comment type="sequence caution" evidence="3">
    <conflict type="erroneous initiation">
        <sequence resource="EMBL-CDS" id="AAF84952"/>
    </conflict>
</comment>
<protein>
    <recommendedName>
        <fullName>3-deoxy-D-manno-octulosonic acid kinase</fullName>
        <shortName>Kdo kinase</shortName>
        <ecNumber>2.7.1.166</ecNumber>
    </recommendedName>
</protein>
<accession>Q9PBJ1</accession>
<reference key="1">
    <citation type="journal article" date="2000" name="Nature">
        <title>The genome sequence of the plant pathogen Xylella fastidiosa.</title>
        <authorList>
            <person name="Simpson A.J.G."/>
            <person name="Reinach F.C."/>
            <person name="Arruda P."/>
            <person name="Abreu F.A."/>
            <person name="Acencio M."/>
            <person name="Alvarenga R."/>
            <person name="Alves L.M.C."/>
            <person name="Araya J.E."/>
            <person name="Baia G.S."/>
            <person name="Baptista C.S."/>
            <person name="Barros M.H."/>
            <person name="Bonaccorsi E.D."/>
            <person name="Bordin S."/>
            <person name="Bove J.M."/>
            <person name="Briones M.R.S."/>
            <person name="Bueno M.R.P."/>
            <person name="Camargo A.A."/>
            <person name="Camargo L.E.A."/>
            <person name="Carraro D.M."/>
            <person name="Carrer H."/>
            <person name="Colauto N.B."/>
            <person name="Colombo C."/>
            <person name="Costa F.F."/>
            <person name="Costa M.C.R."/>
            <person name="Costa-Neto C.M."/>
            <person name="Coutinho L.L."/>
            <person name="Cristofani M."/>
            <person name="Dias-Neto E."/>
            <person name="Docena C."/>
            <person name="El-Dorry H."/>
            <person name="Facincani A.P."/>
            <person name="Ferreira A.J.S."/>
            <person name="Ferreira V.C.A."/>
            <person name="Ferro J.A."/>
            <person name="Fraga J.S."/>
            <person name="Franca S.C."/>
            <person name="Franco M.C."/>
            <person name="Frohme M."/>
            <person name="Furlan L.R."/>
            <person name="Garnier M."/>
            <person name="Goldman G.H."/>
            <person name="Goldman M.H.S."/>
            <person name="Gomes S.L."/>
            <person name="Gruber A."/>
            <person name="Ho P.L."/>
            <person name="Hoheisel J.D."/>
            <person name="Junqueira M.L."/>
            <person name="Kemper E.L."/>
            <person name="Kitajima J.P."/>
            <person name="Krieger J.E."/>
            <person name="Kuramae E.E."/>
            <person name="Laigret F."/>
            <person name="Lambais M.R."/>
            <person name="Leite L.C.C."/>
            <person name="Lemos E.G.M."/>
            <person name="Lemos M.V.F."/>
            <person name="Lopes S.A."/>
            <person name="Lopes C.R."/>
            <person name="Machado J.A."/>
            <person name="Machado M.A."/>
            <person name="Madeira A.M.B.N."/>
            <person name="Madeira H.M.F."/>
            <person name="Marino C.L."/>
            <person name="Marques M.V."/>
            <person name="Martins E.A.L."/>
            <person name="Martins E.M.F."/>
            <person name="Matsukuma A.Y."/>
            <person name="Menck C.F.M."/>
            <person name="Miracca E.C."/>
            <person name="Miyaki C.Y."/>
            <person name="Monteiro-Vitorello C.B."/>
            <person name="Moon D.H."/>
            <person name="Nagai M.A."/>
            <person name="Nascimento A.L.T.O."/>
            <person name="Netto L.E.S."/>
            <person name="Nhani A. Jr."/>
            <person name="Nobrega F.G."/>
            <person name="Nunes L.R."/>
            <person name="Oliveira M.A."/>
            <person name="de Oliveira M.C."/>
            <person name="de Oliveira R.C."/>
            <person name="Palmieri D.A."/>
            <person name="Paris A."/>
            <person name="Peixoto B.R."/>
            <person name="Pereira G.A.G."/>
            <person name="Pereira H.A. Jr."/>
            <person name="Pesquero J.B."/>
            <person name="Quaggio R.B."/>
            <person name="Roberto P.G."/>
            <person name="Rodrigues V."/>
            <person name="de Rosa A.J.M."/>
            <person name="de Rosa V.E. Jr."/>
            <person name="de Sa R.G."/>
            <person name="Santelli R.V."/>
            <person name="Sawasaki H.E."/>
            <person name="da Silva A.C.R."/>
            <person name="da Silva A.M."/>
            <person name="da Silva F.R."/>
            <person name="Silva W.A. Jr."/>
            <person name="da Silveira J.F."/>
            <person name="Silvestri M.L.Z."/>
            <person name="Siqueira W.J."/>
            <person name="de Souza A.A."/>
            <person name="de Souza A.P."/>
            <person name="Terenzi M.F."/>
            <person name="Truffi D."/>
            <person name="Tsai S.M."/>
            <person name="Tsuhako M.H."/>
            <person name="Vallada H."/>
            <person name="Van Sluys M.A."/>
            <person name="Verjovski-Almeida S."/>
            <person name="Vettore A.L."/>
            <person name="Zago M.A."/>
            <person name="Zatz M."/>
            <person name="Meidanis J."/>
            <person name="Setubal J.C."/>
        </authorList>
    </citation>
    <scope>NUCLEOTIDE SEQUENCE [LARGE SCALE GENOMIC DNA]</scope>
    <source>
        <strain>9a5c</strain>
    </source>
</reference>
<dbReference type="EC" id="2.7.1.166"/>
<dbReference type="EMBL" id="AE003849">
    <property type="protein sequence ID" value="AAF84952.1"/>
    <property type="status" value="ALT_INIT"/>
    <property type="molecule type" value="Genomic_DNA"/>
</dbReference>
<dbReference type="PIR" id="E82594">
    <property type="entry name" value="E82594"/>
</dbReference>
<dbReference type="RefSeq" id="WP_031336482.1">
    <property type="nucleotide sequence ID" value="NC_002488.3"/>
</dbReference>
<dbReference type="STRING" id="160492.XF_2153"/>
<dbReference type="KEGG" id="xfa:XF_2153"/>
<dbReference type="eggNOG" id="COG3642">
    <property type="taxonomic scope" value="Bacteria"/>
</dbReference>
<dbReference type="HOGENOM" id="CLU_094226_0_0_6"/>
<dbReference type="UniPathway" id="UPA00958"/>
<dbReference type="Proteomes" id="UP000000812">
    <property type="component" value="Chromosome"/>
</dbReference>
<dbReference type="GO" id="GO:0005829">
    <property type="term" value="C:cytosol"/>
    <property type="evidence" value="ECO:0007669"/>
    <property type="project" value="TreeGrafter"/>
</dbReference>
<dbReference type="GO" id="GO:0005886">
    <property type="term" value="C:plasma membrane"/>
    <property type="evidence" value="ECO:0007669"/>
    <property type="project" value="UniProtKB-SubCell"/>
</dbReference>
<dbReference type="GO" id="GO:0030688">
    <property type="term" value="C:preribosome, small subunit precursor"/>
    <property type="evidence" value="ECO:0007669"/>
    <property type="project" value="TreeGrafter"/>
</dbReference>
<dbReference type="GO" id="GO:0005524">
    <property type="term" value="F:ATP binding"/>
    <property type="evidence" value="ECO:0007669"/>
    <property type="project" value="UniProtKB-UniRule"/>
</dbReference>
<dbReference type="GO" id="GO:0004672">
    <property type="term" value="F:protein kinase activity"/>
    <property type="evidence" value="ECO:0007669"/>
    <property type="project" value="TreeGrafter"/>
</dbReference>
<dbReference type="GO" id="GO:0009244">
    <property type="term" value="P:lipopolysaccharide core region biosynthetic process"/>
    <property type="evidence" value="ECO:0007669"/>
    <property type="project" value="UniProtKB-UniRule"/>
</dbReference>
<dbReference type="GO" id="GO:0030490">
    <property type="term" value="P:maturation of SSU-rRNA"/>
    <property type="evidence" value="ECO:0007669"/>
    <property type="project" value="TreeGrafter"/>
</dbReference>
<dbReference type="Gene3D" id="1.10.510.10">
    <property type="entry name" value="Transferase(Phosphotransferase) domain 1"/>
    <property type="match status" value="1"/>
</dbReference>
<dbReference type="HAMAP" id="MF_00521">
    <property type="entry name" value="KDO_kinase"/>
    <property type="match status" value="1"/>
</dbReference>
<dbReference type="InterPro" id="IPR022826">
    <property type="entry name" value="KDO_kinase"/>
</dbReference>
<dbReference type="InterPro" id="IPR011009">
    <property type="entry name" value="Kinase-like_dom_sf"/>
</dbReference>
<dbReference type="NCBIfam" id="NF002475">
    <property type="entry name" value="PRK01723.1"/>
    <property type="match status" value="1"/>
</dbReference>
<dbReference type="PANTHER" id="PTHR45852">
    <property type="entry name" value="SER/THR-PROTEIN KINASE RIO2"/>
    <property type="match status" value="1"/>
</dbReference>
<dbReference type="PANTHER" id="PTHR45852:SF1">
    <property type="entry name" value="SERINE_THREONINE-PROTEIN KINASE RIO2"/>
    <property type="match status" value="1"/>
</dbReference>
<dbReference type="Pfam" id="PF06293">
    <property type="entry name" value="Kdo"/>
    <property type="match status" value="1"/>
</dbReference>
<dbReference type="SUPFAM" id="SSF56112">
    <property type="entry name" value="Protein kinase-like (PK-like)"/>
    <property type="match status" value="1"/>
</dbReference>